<organism>
    <name type="scientific">Sus scrofa</name>
    <name type="common">Pig</name>
    <dbReference type="NCBI Taxonomy" id="9823"/>
    <lineage>
        <taxon>Eukaryota</taxon>
        <taxon>Metazoa</taxon>
        <taxon>Chordata</taxon>
        <taxon>Craniata</taxon>
        <taxon>Vertebrata</taxon>
        <taxon>Euteleostomi</taxon>
        <taxon>Mammalia</taxon>
        <taxon>Eutheria</taxon>
        <taxon>Laurasiatheria</taxon>
        <taxon>Artiodactyla</taxon>
        <taxon>Suina</taxon>
        <taxon>Suidae</taxon>
        <taxon>Sus</taxon>
    </lineage>
</organism>
<comment type="function">
    <text evidence="4">Potassium channel activated by both membrane depolarization or increase in cytosolic Ca(2+) that mediates export of K(+). It is also activated by the concentration of cytosolic Mg(2+). Its activation dampens the excitatory events that elevate the cytosolic Ca(2+) concentration and/or depolarize the cell membrane. It therefore contributes to repolarization of the membrane potential. Plays a key role in controlling excitability in a number of systems, such as regulation of the contraction of smooth muscle, the tuning of hair cells in the cochlea, regulation of transmitter release, and innate immunity. In smooth muscles, its activation by high level of Ca(2+), caused by ryanodine receptors in the sarcoplasmic reticulum, regulates the membrane potential. In cochlea cells, its number and kinetic properties partly determine the characteristic frequency of each hair cell and thereby helps to establish a tonotopic map. Kinetics of KCNMA1 channels are determined by alternative splicing, phosphorylation status and its combination with modulating beta subunits. Highly sensitive to both iberiotoxin (IbTx) and charybdotoxin (CTX) (By similarity).</text>
</comment>
<comment type="catalytic activity">
    <reaction evidence="4">
        <text>K(+)(in) = K(+)(out)</text>
        <dbReference type="Rhea" id="RHEA:29463"/>
        <dbReference type="ChEBI" id="CHEBI:29103"/>
    </reaction>
</comment>
<comment type="activity regulation">
    <text evidence="4">Ethanol and carbon monoxide-bound heme increase channel activation. Heme inhibits channel activation (By similarity).</text>
</comment>
<comment type="subunit">
    <text evidence="3 4">Homotetramer; which constitutes the calcium-activated potassium channel. Interacts with beta subunits KCNMB1, KCNMB2, KCNMB3 and KCNMB4. Interacts with gamma subunits LRRC26, LRRC38, LRRC52 and LRRC55. Beta and gamma subunits are accessory, and modulate its activity. Interacts with RAB11B (By similarity).</text>
</comment>
<comment type="subcellular location">
    <subcellularLocation>
        <location evidence="4">Cell membrane</location>
        <topology evidence="6">Multi-pass membrane protein</topology>
    </subcellularLocation>
</comment>
<comment type="alternative products">
    <event type="alternative splicing"/>
    <isoform>
        <id>O18866-1</id>
        <name>1</name>
        <sequence type="displayed"/>
    </isoform>
    <text>May be partially controlled by hormonal stress. A number of isoforms are produced.</text>
</comment>
<comment type="domain">
    <text evidence="4">The S0 segment is essential for the modulation by the accessory beta subunits KCNMB1, KCNMB2, KCNMB3 and KCNMB4.</text>
</comment>
<comment type="domain">
    <text evidence="4">The S4 segment, which is characterized by a series of positively charged amino acids at every third position, is part of the voltage-sensor.</text>
</comment>
<comment type="domain">
    <text evidence="4">The pore-forming domain (also referred as P region) is imbedded into the membrane, and forms the selectivity filter of the pore. It contains the signature sequence of potassium channels that displays selectivity to potassium (By similarity).</text>
</comment>
<comment type="domain">
    <text evidence="1">The RCK N-terminal domain mediates the homotetramerization, thereby promoting the assembly of monomers into functional potassium channel. It includes binding sites for Ca(2+) and Mg(2+) (By similarity).</text>
</comment>
<comment type="domain">
    <text evidence="4">The heme-binding motif mediates inhibition of channel activation by heme. Carbon monoxide-bound heme leads to increased channel activation (By similarity).</text>
</comment>
<comment type="domain">
    <text evidence="2">The calcium bowl constitutes one of the Ca(2+) sensors and probably acts as a Ca(2+)-binding site. There are however other Ca(2+) sensor regions required for activation of the channel.</text>
</comment>
<comment type="PTM">
    <text evidence="4 9">Phosphorylated (Probable). Phosphorylation by kinases such as PKA and/or PKG. In smooth muscles, phosphorylation affects its activity (By similarity).</text>
</comment>
<comment type="PTM">
    <text evidence="4">Palmitoylation by ZDHHC22 and ZDHHC23 within the intracellular linker between the S0 and S1 transmembrane domains regulates localization to the plasma membrane. Depalmitoylated by LYPLA1 and LYPLAL1, leading to retard exit from the trans-Golgi network (By similarity).</text>
</comment>
<comment type="miscellaneous">
    <text>The protein was initially thought to contain two functionally distinct parts: The core channel (from the N-terminus to the S9 segment) that mediates the channel activity, and the cytoplasmic tail (from the S9 segment to the C-terminus) that mediates the calcium sensing. The situation is however more complex, since the core channel contains binding sites for Ca(2+) and Mg(2+).</text>
</comment>
<comment type="similarity">
    <text evidence="9">Belongs to the potassium channel family. Calcium-activated (TC 1.A.1.3) subfamily. KCa1.1/KCNMA1 sub-subfamily.</text>
</comment>
<accession>O18866</accession>
<evidence type="ECO:0000250" key="1"/>
<evidence type="ECO:0000250" key="2">
    <source>
        <dbReference type="UniProtKB" id="B7ZC96"/>
    </source>
</evidence>
<evidence type="ECO:0000250" key="3">
    <source>
        <dbReference type="UniProtKB" id="Q08460"/>
    </source>
</evidence>
<evidence type="ECO:0000250" key="4">
    <source>
        <dbReference type="UniProtKB" id="Q12791"/>
    </source>
</evidence>
<evidence type="ECO:0000250" key="5">
    <source>
        <dbReference type="UniProtKB" id="Q28204"/>
    </source>
</evidence>
<evidence type="ECO:0000255" key="6"/>
<evidence type="ECO:0000255" key="7">
    <source>
        <dbReference type="PROSITE-ProRule" id="PRU00543"/>
    </source>
</evidence>
<evidence type="ECO:0000256" key="8">
    <source>
        <dbReference type="SAM" id="MobiDB-lite"/>
    </source>
</evidence>
<evidence type="ECO:0000305" key="9"/>
<keyword id="KW-0025">Alternative splicing</keyword>
<keyword id="KW-0106">Calcium</keyword>
<keyword id="KW-1003">Cell membrane</keyword>
<keyword id="KW-0407">Ion channel</keyword>
<keyword id="KW-0406">Ion transport</keyword>
<keyword id="KW-0449">Lipoprotein</keyword>
<keyword id="KW-0460">Magnesium</keyword>
<keyword id="KW-0472">Membrane</keyword>
<keyword id="KW-0479">Metal-binding</keyword>
<keyword id="KW-0564">Palmitate</keyword>
<keyword id="KW-0597">Phosphoprotein</keyword>
<keyword id="KW-0630">Potassium</keyword>
<keyword id="KW-0631">Potassium channel</keyword>
<keyword id="KW-0633">Potassium transport</keyword>
<keyword id="KW-1185">Reference proteome</keyword>
<keyword id="KW-0812">Transmembrane</keyword>
<keyword id="KW-1133">Transmembrane helix</keyword>
<keyword id="KW-0813">Transport</keyword>
<keyword id="KW-0851">Voltage-gated channel</keyword>
<feature type="chain" id="PRO_0000054135" description="Calcium-activated potassium channel subunit alpha-1">
    <location>
        <begin position="1" status="less than"/>
        <end position="1152"/>
    </location>
</feature>
<feature type="topological domain" description="Extracellular" evidence="6">
    <location>
        <begin position="1" status="less than"/>
        <end position="60"/>
    </location>
</feature>
<feature type="transmembrane region" description="Helical; Name=Segment S0" evidence="6">
    <location>
        <begin position="61"/>
        <end position="81"/>
    </location>
</feature>
<feature type="topological domain" description="Cytoplasmic" evidence="6">
    <location>
        <begin position="82"/>
        <end position="152"/>
    </location>
</feature>
<feature type="transmembrane region" description="Helical; Name=Segment S1" evidence="6">
    <location>
        <begin position="153"/>
        <end position="173"/>
    </location>
</feature>
<feature type="topological domain" description="Extracellular" evidence="6">
    <location>
        <begin position="174"/>
        <end position="188"/>
    </location>
</feature>
<feature type="transmembrane region" description="Helical; Name=Segment S2" evidence="6">
    <location>
        <begin position="189"/>
        <end position="209"/>
    </location>
</feature>
<feature type="topological domain" description="Cytoplasmic" evidence="6">
    <location>
        <begin position="210"/>
        <end position="213"/>
    </location>
</feature>
<feature type="transmembrane region" description="Helical; Name=Segment S3" evidence="6">
    <location>
        <begin position="214"/>
        <end position="234"/>
    </location>
</feature>
<feature type="topological domain" description="Extracellular" evidence="6">
    <location>
        <begin position="235"/>
        <end position="238"/>
    </location>
</feature>
<feature type="transmembrane region" description="Helical; Voltage-sensor; Name=Segment S4" evidence="6">
    <location>
        <begin position="239"/>
        <end position="259"/>
    </location>
</feature>
<feature type="topological domain" description="Cytoplasmic" evidence="6">
    <location>
        <begin position="260"/>
        <end position="274"/>
    </location>
</feature>
<feature type="transmembrane region" description="Helical; Name=Segment S5" evidence="6">
    <location>
        <begin position="275"/>
        <end position="295"/>
    </location>
</feature>
<feature type="topological domain" description="Extracellular" evidence="6">
    <location>
        <begin position="296"/>
        <end position="309"/>
    </location>
</feature>
<feature type="intramembrane region" description="Pore-forming; Name=P region" evidence="6">
    <location>
        <begin position="310"/>
        <end position="332"/>
    </location>
</feature>
<feature type="topological domain" description="Extracellular" evidence="6">
    <location>
        <begin position="333"/>
        <end position="341"/>
    </location>
</feature>
<feature type="transmembrane region" description="Helical; Name=Segment S6" evidence="6">
    <location>
        <begin position="342"/>
        <end position="362"/>
    </location>
</feature>
<feature type="topological domain" description="Cytoplasmic" evidence="6">
    <location>
        <begin position="363"/>
        <end position="1152"/>
    </location>
</feature>
<feature type="domain" description="RCK N-terminal 1" evidence="7">
    <location>
        <begin position="381"/>
        <end position="523"/>
    </location>
</feature>
<feature type="domain" description="RCK N-terminal 2" evidence="7">
    <location>
        <begin position="755"/>
        <end position="899"/>
    </location>
</feature>
<feature type="region of interest" description="Disordered" evidence="8">
    <location>
        <begin position="1"/>
        <end position="37"/>
    </location>
</feature>
<feature type="region of interest" description="Segment S7">
    <location>
        <begin position="530"/>
        <end position="550"/>
    </location>
</feature>
<feature type="region of interest" description="Segment S8">
    <location>
        <begin position="587"/>
        <end position="607"/>
    </location>
</feature>
<feature type="region of interest" description="Heme-binding motif" evidence="4">
    <location>
        <begin position="651"/>
        <end position="655"/>
    </location>
</feature>
<feature type="region of interest" description="Disordered" evidence="8">
    <location>
        <begin position="675"/>
        <end position="703"/>
    </location>
</feature>
<feature type="region of interest" description="Segment S9">
    <location>
        <begin position="753"/>
        <end position="773"/>
    </location>
</feature>
<feature type="region of interest" description="Segment S10">
    <location>
        <begin position="948"/>
        <end position="968"/>
    </location>
</feature>
<feature type="region of interest" description="Disordered" evidence="8">
    <location>
        <begin position="1102"/>
        <end position="1152"/>
    </location>
</feature>
<feature type="short sequence motif" description="Selectivity for potassium" evidence="1">
    <location>
        <begin position="326"/>
        <end position="329"/>
    </location>
</feature>
<feature type="short sequence motif" description="Calcium bowl" evidence="2">
    <location>
        <begin position="919"/>
        <end position="941"/>
    </location>
</feature>
<feature type="compositionally biased region" description="Low complexity" evidence="8">
    <location>
        <begin position="15"/>
        <end position="34"/>
    </location>
</feature>
<feature type="compositionally biased region" description="Low complexity" evidence="8">
    <location>
        <begin position="1102"/>
        <end position="1127"/>
    </location>
</feature>
<feature type="compositionally biased region" description="Basic and acidic residues" evidence="8">
    <location>
        <begin position="1136"/>
        <end position="1152"/>
    </location>
</feature>
<feature type="binding site" evidence="9">
    <location>
        <position position="413"/>
    </location>
    <ligand>
        <name>Mg(2+)</name>
        <dbReference type="ChEBI" id="CHEBI:18420"/>
    </ligand>
</feature>
<feature type="binding site" evidence="9">
    <location>
        <position position="436"/>
    </location>
    <ligand>
        <name>Mg(2+)</name>
        <dbReference type="ChEBI" id="CHEBI:18420"/>
    </ligand>
</feature>
<feature type="binding site" evidence="9">
    <location>
        <position position="438"/>
    </location>
    <ligand>
        <name>Mg(2+)</name>
        <dbReference type="ChEBI" id="CHEBI:18420"/>
    </ligand>
</feature>
<feature type="binding site" evidence="2">
    <location>
        <position position="928"/>
    </location>
    <ligand>
        <name>Ca(2+)</name>
        <dbReference type="ChEBI" id="CHEBI:29108"/>
    </ligand>
</feature>
<feature type="binding site" evidence="2">
    <location>
        <position position="931"/>
    </location>
    <ligand>
        <name>Ca(2+)</name>
        <dbReference type="ChEBI" id="CHEBI:29108"/>
    </ligand>
</feature>
<feature type="binding site" evidence="2">
    <location>
        <position position="934"/>
    </location>
    <ligand>
        <name>Ca(2+)</name>
        <dbReference type="ChEBI" id="CHEBI:29108"/>
    </ligand>
</feature>
<feature type="binding site" evidence="2">
    <location>
        <position position="936"/>
    </location>
    <ligand>
        <name>Ca(2+)</name>
        <dbReference type="ChEBI" id="CHEBI:29108"/>
    </ligand>
</feature>
<feature type="modified residue" description="Phosphothreonine" evidence="3">
    <location>
        <position position="679"/>
    </location>
</feature>
<feature type="modified residue" description="Phosphoserine" evidence="3">
    <location>
        <position position="681"/>
    </location>
</feature>
<feature type="modified residue" description="Phosphoserine" evidence="3">
    <location>
        <position position="694"/>
    </location>
</feature>
<feature type="modified residue" description="Phosphoserine" evidence="3">
    <location>
        <position position="698"/>
    </location>
</feature>
<feature type="modified residue" description="Phosphothreonine" evidence="3">
    <location>
        <position position="886"/>
    </location>
</feature>
<feature type="modified residue" description="Phosphoserine" evidence="3">
    <location>
        <position position="894"/>
    </location>
</feature>
<feature type="modified residue" description="Phosphoserine" evidence="3">
    <location>
        <position position="898"/>
    </location>
</feature>
<feature type="modified residue" description="Phosphoserine" evidence="5">
    <location>
        <position position="1137"/>
    </location>
</feature>
<feature type="modified residue" description="Phosphoserine" evidence="5">
    <location>
        <position position="1140"/>
    </location>
</feature>
<feature type="lipid moiety-binding region" description="S-palmitoyl cysteine" evidence="4">
    <location>
        <position position="92"/>
    </location>
</feature>
<feature type="lipid moiety-binding region" description="S-palmitoyl cysteine" evidence="4">
    <location>
        <position position="93"/>
    </location>
</feature>
<feature type="lipid moiety-binding region" description="S-palmitoyl cysteine" evidence="4">
    <location>
        <position position="95"/>
    </location>
</feature>
<feature type="non-terminal residue">
    <location>
        <position position="1"/>
    </location>
</feature>
<protein>
    <recommendedName>
        <fullName>Calcium-activated potassium channel subunit alpha-1</fullName>
    </recommendedName>
    <alternativeName>
        <fullName>BK channel</fullName>
    </alternativeName>
    <alternativeName>
        <fullName>BKCA alpha</fullName>
    </alternativeName>
    <alternativeName>
        <fullName>Calcium-activated potassium channel, subfamily M subunit alpha-1</fullName>
    </alternativeName>
    <alternativeName>
        <fullName>K(VCA)alpha</fullName>
    </alternativeName>
    <alternativeName>
        <fullName>KCa1.1</fullName>
    </alternativeName>
    <alternativeName>
        <fullName>Maxi K channel</fullName>
        <shortName>MaxiK</shortName>
    </alternativeName>
    <alternativeName>
        <fullName>Slo-alpha</fullName>
    </alternativeName>
    <alternativeName>
        <fullName>Slo1</fullName>
    </alternativeName>
    <alternativeName>
        <fullName>Slowpoke homolog</fullName>
        <shortName>Slo homolog</shortName>
    </alternativeName>
</protein>
<sequence length="1152" mass="129006">MSSNIHANHLSLDASSSSSSSSSSSSSSSSSSSSVHEPKMDALIIPVTMEVPCDSRGQRMWWAFLASSMVTFFGGLFIILLWRTLKYLWTVCCHCGGKTKEAQKINNGASQADGTLKPVDEKEEVVAAEVGWMTSVKDWAGVMISAQTLTGRVLVVLVFALSIGALVIYFIDSSNPIESCQNFYKDFTLQIDMAFNVFFLLYFGLRFIAANDKLWFWLEVNSVVDFFTVPPVFVSVYLNRSWLGLRFLRALRLIQFSEILQFLNILKTSNSIKLVNLLSIFISTWLTAAGFIHLVENSGDPWENFQNNQALTYWECVYLLMVTMSTVGYGDVYAKTTLGRLFMVFFILGGLAMFASYVPEIIELIGNRKKYGGSYSAVSGRKHIVVCGHITLESVSNFLKDFLHKDRDDVNVEIVFLHNISPNLELEALFKRHFTQVEFYQGSVLNPHDLARVKIESADACLILANKYCADPDAEDASNIMRVISIKNYHPKIRIITQMLQYHNKAHLLNIPSWNWKEGDDAICLAELKLGFIAQSCLAQGLSTMLANLFSMRSFIKIEEDTWQKYYLEGVSNEMYTEYLSSAFVGLSFPTVCELCFVKLKLLMIAIEYKSANRESRILINPGNHLKIQEGTLGFFIASDAKEVKRAFFYCKACHDDITDPKRIKKCGCKRLEDEQPSTLSPKKKQRNGGMRNSPSSSPKLMRHDPLLIPGNDQIDNMDSNVKKYDSTGMFHWCAPKEIEKVILTRSEAAMTVLSGHVVVCIFGDVSSALIGLRNLVMPLRASNFHYHELKHIVFVGSIEYLKREWETLHNFPKVSILPGTPLSRADLRAVNINLCDMCVILSANQNNIDDTSLQDKECILASLNIKSMQFDDSIGVLQANSQGFTPPGMDRSSPDNSPVHGMLRQPSITTGVNIPIITELVNDTNVQFLDQDDDDDPDTELYLTQPFACGTAFAVSVLDSLMSATYFNDNILTLIRTLVTGGATPELEALIAEENALRGGYSTPQTLANRDRCRVAQLALLDGPFADLGDGGCYGDLFCKALKTYNMLCFGIYRLRDAHLSTPSQCTKRYVITNPPYEFELVPTDLIFCLMQFDHNAGQSRASLSHSSHSSQSSSKKSSSVHSIPSTANRQNRPKSRESRDKQKYVQEERL</sequence>
<reference key="1">
    <citation type="journal article" date="1998" name="Curr. Eye Res.">
        <title>Ion transporters and receptors in cDNA libraries from lens and cornea epithelia.</title>
        <authorList>
            <person name="Shepard A.R."/>
            <person name="Rae J.L."/>
        </authorList>
    </citation>
    <scope>NUCLEOTIDE SEQUENCE [MRNA]</scope>
    <source>
        <tissue>Lens epithelium</tissue>
    </source>
</reference>
<dbReference type="EMBL" id="AF026000">
    <property type="protein sequence ID" value="AAB88803.2"/>
    <property type="molecule type" value="mRNA"/>
</dbReference>
<dbReference type="RefSeq" id="NP_999384.1">
    <molecule id="O18866-1"/>
    <property type="nucleotide sequence ID" value="NM_214219.1"/>
</dbReference>
<dbReference type="BMRB" id="O18866"/>
<dbReference type="SMR" id="O18866"/>
<dbReference type="FunCoup" id="O18866">
    <property type="interactions" value="325"/>
</dbReference>
<dbReference type="STRING" id="9823.ENSSSCP00000032909"/>
<dbReference type="PaxDb" id="9823-ENSSSCP00000011011"/>
<dbReference type="GeneID" id="397434"/>
<dbReference type="KEGG" id="ssc:397434"/>
<dbReference type="CTD" id="3778"/>
<dbReference type="eggNOG" id="KOG1420">
    <property type="taxonomic scope" value="Eukaryota"/>
</dbReference>
<dbReference type="InParanoid" id="O18866"/>
<dbReference type="OrthoDB" id="10035564at2759"/>
<dbReference type="Proteomes" id="UP000008227">
    <property type="component" value="Unplaced"/>
</dbReference>
<dbReference type="Proteomes" id="UP000314985">
    <property type="component" value="Unplaced"/>
</dbReference>
<dbReference type="Proteomes" id="UP000694570">
    <property type="component" value="Unplaced"/>
</dbReference>
<dbReference type="Proteomes" id="UP000694571">
    <property type="component" value="Unplaced"/>
</dbReference>
<dbReference type="Proteomes" id="UP000694720">
    <property type="component" value="Unplaced"/>
</dbReference>
<dbReference type="Proteomes" id="UP000694722">
    <property type="component" value="Unplaced"/>
</dbReference>
<dbReference type="Proteomes" id="UP000694723">
    <property type="component" value="Unplaced"/>
</dbReference>
<dbReference type="Proteomes" id="UP000694724">
    <property type="component" value="Unplaced"/>
</dbReference>
<dbReference type="Proteomes" id="UP000694725">
    <property type="component" value="Unplaced"/>
</dbReference>
<dbReference type="Proteomes" id="UP000694726">
    <property type="component" value="Unplaced"/>
</dbReference>
<dbReference type="Proteomes" id="UP000694727">
    <property type="component" value="Unplaced"/>
</dbReference>
<dbReference type="Proteomes" id="UP000694728">
    <property type="component" value="Unplaced"/>
</dbReference>
<dbReference type="GO" id="GO:0034702">
    <property type="term" value="C:monoatomic ion channel complex"/>
    <property type="evidence" value="ECO:0007669"/>
    <property type="project" value="UniProtKB-KW"/>
</dbReference>
<dbReference type="GO" id="GO:0045211">
    <property type="term" value="C:postsynaptic membrane"/>
    <property type="evidence" value="ECO:0000318"/>
    <property type="project" value="GO_Central"/>
</dbReference>
<dbReference type="GO" id="GO:0015269">
    <property type="term" value="F:calcium-activated potassium channel activity"/>
    <property type="evidence" value="ECO:0000250"/>
    <property type="project" value="UniProtKB"/>
</dbReference>
<dbReference type="GO" id="GO:0060072">
    <property type="term" value="F:large conductance calcium-activated potassium channel activity"/>
    <property type="evidence" value="ECO:0000318"/>
    <property type="project" value="GO_Central"/>
</dbReference>
<dbReference type="GO" id="GO:0046872">
    <property type="term" value="F:metal ion binding"/>
    <property type="evidence" value="ECO:0007669"/>
    <property type="project" value="UniProtKB-KW"/>
</dbReference>
<dbReference type="GO" id="GO:0005249">
    <property type="term" value="F:voltage-gated potassium channel activity"/>
    <property type="evidence" value="ECO:0000250"/>
    <property type="project" value="UniProtKB"/>
</dbReference>
<dbReference type="GO" id="GO:1902632">
    <property type="term" value="P:positive regulation of membrane hyperpolarization"/>
    <property type="evidence" value="ECO:0000315"/>
    <property type="project" value="AgBase"/>
</dbReference>
<dbReference type="GO" id="GO:0071805">
    <property type="term" value="P:potassium ion transmembrane transport"/>
    <property type="evidence" value="ECO:0000318"/>
    <property type="project" value="GO_Central"/>
</dbReference>
<dbReference type="GO" id="GO:0042391">
    <property type="term" value="P:regulation of membrane potential"/>
    <property type="evidence" value="ECO:0000318"/>
    <property type="project" value="GO_Central"/>
</dbReference>
<dbReference type="GO" id="GO:0060087">
    <property type="term" value="P:relaxation of vascular associated smooth muscle"/>
    <property type="evidence" value="ECO:0000315"/>
    <property type="project" value="AgBase"/>
</dbReference>
<dbReference type="GO" id="GO:0042311">
    <property type="term" value="P:vasodilation"/>
    <property type="evidence" value="ECO:0000318"/>
    <property type="project" value="GO_Central"/>
</dbReference>
<dbReference type="FunFam" id="3.40.50.720:FF:000098">
    <property type="entry name" value="calcium-activated potassium channel subunit alpha-1 isoform X3"/>
    <property type="match status" value="1"/>
</dbReference>
<dbReference type="FunFam" id="3.40.50.720:FF:000005">
    <property type="entry name" value="calcium-activated potassium channel subunit alpha-1 isoform X6"/>
    <property type="match status" value="1"/>
</dbReference>
<dbReference type="FunFam" id="1.10.287.70:FF:000015">
    <property type="entry name" value="Calcium-activated potassium channel subunit alpha-1 isoform X7"/>
    <property type="match status" value="1"/>
</dbReference>
<dbReference type="Gene3D" id="1.10.287.70">
    <property type="match status" value="1"/>
</dbReference>
<dbReference type="Gene3D" id="3.40.50.720">
    <property type="entry name" value="NAD(P)-binding Rossmann-like Domain"/>
    <property type="match status" value="2"/>
</dbReference>
<dbReference type="InterPro" id="IPR005821">
    <property type="entry name" value="Ion_trans_dom"/>
</dbReference>
<dbReference type="InterPro" id="IPR003929">
    <property type="entry name" value="K_chnl_BK_asu"/>
</dbReference>
<dbReference type="InterPro" id="IPR047871">
    <property type="entry name" value="K_chnl_Slo-like"/>
</dbReference>
<dbReference type="InterPro" id="IPR036291">
    <property type="entry name" value="NAD(P)-bd_dom_sf"/>
</dbReference>
<dbReference type="InterPro" id="IPR003148">
    <property type="entry name" value="RCK_N"/>
</dbReference>
<dbReference type="InterPro" id="IPR048735">
    <property type="entry name" value="Slowpoke-like_C"/>
</dbReference>
<dbReference type="PANTHER" id="PTHR10027">
    <property type="entry name" value="CALCIUM-ACTIVATED POTASSIUM CHANNEL ALPHA CHAIN"/>
    <property type="match status" value="1"/>
</dbReference>
<dbReference type="PANTHER" id="PTHR10027:SF28">
    <property type="entry name" value="CALCIUM-ACTIVATED POTASSIUM CHANNEL SUBUNIT ALPHA-1"/>
    <property type="match status" value="1"/>
</dbReference>
<dbReference type="Pfam" id="PF03493">
    <property type="entry name" value="BK_channel_a"/>
    <property type="match status" value="1"/>
</dbReference>
<dbReference type="Pfam" id="PF00520">
    <property type="entry name" value="Ion_trans"/>
    <property type="match status" value="1"/>
</dbReference>
<dbReference type="Pfam" id="PF22614">
    <property type="entry name" value="Slo-like_RCK"/>
    <property type="match status" value="2"/>
</dbReference>
<dbReference type="Pfam" id="PF21014">
    <property type="entry name" value="Slowpoke_C"/>
    <property type="match status" value="1"/>
</dbReference>
<dbReference type="PRINTS" id="PR01449">
    <property type="entry name" value="BKCHANNELA"/>
</dbReference>
<dbReference type="PRINTS" id="PR00169">
    <property type="entry name" value="KCHANNEL"/>
</dbReference>
<dbReference type="SUPFAM" id="SSF51735">
    <property type="entry name" value="NAD(P)-binding Rossmann-fold domains"/>
    <property type="match status" value="1"/>
</dbReference>
<dbReference type="SUPFAM" id="SSF81324">
    <property type="entry name" value="Voltage-gated potassium channels"/>
    <property type="match status" value="1"/>
</dbReference>
<dbReference type="PROSITE" id="PS51201">
    <property type="entry name" value="RCK_N"/>
    <property type="match status" value="2"/>
</dbReference>
<gene>
    <name type="primary">KCNMA1</name>
    <name type="synonym">KCNMA</name>
</gene>
<proteinExistence type="evidence at transcript level"/>
<name>KCMA1_PIG</name>